<reference key="1">
    <citation type="journal article" date="2005" name="Proc. Natl. Acad. Sci. U.S.A.">
        <title>The complete genome sequence of Mycobacterium avium subspecies paratuberculosis.</title>
        <authorList>
            <person name="Li L."/>
            <person name="Bannantine J.P."/>
            <person name="Zhang Q."/>
            <person name="Amonsin A."/>
            <person name="May B.J."/>
            <person name="Alt D."/>
            <person name="Banerji N."/>
            <person name="Kanjilal S."/>
            <person name="Kapur V."/>
        </authorList>
    </citation>
    <scope>NUCLEOTIDE SEQUENCE [LARGE SCALE GENOMIC DNA]</scope>
    <source>
        <strain>ATCC BAA-968 / K-10</strain>
    </source>
</reference>
<comment type="function">
    <text evidence="1">Catalyzes the hydrolysis of the adenine ring of phosphoribosyl-AMP.</text>
</comment>
<comment type="catalytic activity">
    <reaction evidence="1">
        <text>1-(5-phospho-beta-D-ribosyl)-5'-AMP + H2O = 1-(5-phospho-beta-D-ribosyl)-5-[(5-phospho-beta-D-ribosylamino)methylideneamino]imidazole-4-carboxamide</text>
        <dbReference type="Rhea" id="RHEA:20049"/>
        <dbReference type="ChEBI" id="CHEBI:15377"/>
        <dbReference type="ChEBI" id="CHEBI:58435"/>
        <dbReference type="ChEBI" id="CHEBI:59457"/>
        <dbReference type="EC" id="3.5.4.19"/>
    </reaction>
</comment>
<comment type="cofactor">
    <cofactor evidence="1">
        <name>Mg(2+)</name>
        <dbReference type="ChEBI" id="CHEBI:18420"/>
    </cofactor>
    <text evidence="1">Binds 1 Mg(2+) ion per subunit.</text>
</comment>
<comment type="cofactor">
    <cofactor evidence="1">
        <name>Zn(2+)</name>
        <dbReference type="ChEBI" id="CHEBI:29105"/>
    </cofactor>
    <text evidence="1">Binds 1 zinc ion per subunit.</text>
</comment>
<comment type="pathway">
    <text evidence="1">Amino-acid biosynthesis; L-histidine biosynthesis; L-histidine from 5-phospho-alpha-D-ribose 1-diphosphate: step 3/9.</text>
</comment>
<comment type="subunit">
    <text evidence="1">Homodimer.</text>
</comment>
<comment type="subcellular location">
    <subcellularLocation>
        <location evidence="1">Cytoplasm</location>
    </subcellularLocation>
</comment>
<comment type="similarity">
    <text evidence="1">Belongs to the PRA-CH family.</text>
</comment>
<proteinExistence type="inferred from homology"/>
<keyword id="KW-0028">Amino-acid biosynthesis</keyword>
<keyword id="KW-0963">Cytoplasm</keyword>
<keyword id="KW-0368">Histidine biosynthesis</keyword>
<keyword id="KW-0378">Hydrolase</keyword>
<keyword id="KW-0460">Magnesium</keyword>
<keyword id="KW-0479">Metal-binding</keyword>
<keyword id="KW-1185">Reference proteome</keyword>
<keyword id="KW-0862">Zinc</keyword>
<name>HIS3_MYCPA</name>
<protein>
    <recommendedName>
        <fullName evidence="1">Phosphoribosyl-AMP cyclohydrolase</fullName>
        <shortName evidence="1">PRA-CH</shortName>
        <ecNumber evidence="1">3.5.4.19</ecNumber>
    </recommendedName>
</protein>
<gene>
    <name evidence="1" type="primary">hisI</name>
    <name type="synonym">hisI2</name>
    <name type="ordered locus">MAP_1300</name>
</gene>
<accession>P60543</accession>
<dbReference type="EC" id="3.5.4.19" evidence="1"/>
<dbReference type="EMBL" id="AE016958">
    <property type="protein sequence ID" value="AAS03617.1"/>
    <property type="molecule type" value="Genomic_DNA"/>
</dbReference>
<dbReference type="RefSeq" id="WP_003877733.1">
    <property type="nucleotide sequence ID" value="NZ_CP106873.1"/>
</dbReference>
<dbReference type="SMR" id="P60543"/>
<dbReference type="STRING" id="262316.MAP_1300"/>
<dbReference type="KEGG" id="mpa:MAP_1300"/>
<dbReference type="eggNOG" id="COG0139">
    <property type="taxonomic scope" value="Bacteria"/>
</dbReference>
<dbReference type="HOGENOM" id="CLU_048577_5_1_11"/>
<dbReference type="UniPathway" id="UPA00031">
    <property type="reaction ID" value="UER00008"/>
</dbReference>
<dbReference type="Proteomes" id="UP000000580">
    <property type="component" value="Chromosome"/>
</dbReference>
<dbReference type="GO" id="GO:0005737">
    <property type="term" value="C:cytoplasm"/>
    <property type="evidence" value="ECO:0007669"/>
    <property type="project" value="UniProtKB-SubCell"/>
</dbReference>
<dbReference type="GO" id="GO:0000287">
    <property type="term" value="F:magnesium ion binding"/>
    <property type="evidence" value="ECO:0007669"/>
    <property type="project" value="UniProtKB-UniRule"/>
</dbReference>
<dbReference type="GO" id="GO:0004635">
    <property type="term" value="F:phosphoribosyl-AMP cyclohydrolase activity"/>
    <property type="evidence" value="ECO:0007669"/>
    <property type="project" value="UniProtKB-UniRule"/>
</dbReference>
<dbReference type="GO" id="GO:0008270">
    <property type="term" value="F:zinc ion binding"/>
    <property type="evidence" value="ECO:0007669"/>
    <property type="project" value="UniProtKB-UniRule"/>
</dbReference>
<dbReference type="GO" id="GO:0000105">
    <property type="term" value="P:L-histidine biosynthetic process"/>
    <property type="evidence" value="ECO:0007669"/>
    <property type="project" value="UniProtKB-UniRule"/>
</dbReference>
<dbReference type="FunFam" id="3.10.20.810:FF:000001">
    <property type="entry name" value="Histidine biosynthesis bifunctional protein HisIE"/>
    <property type="match status" value="1"/>
</dbReference>
<dbReference type="Gene3D" id="3.10.20.810">
    <property type="entry name" value="Phosphoribosyl-AMP cyclohydrolase"/>
    <property type="match status" value="1"/>
</dbReference>
<dbReference type="HAMAP" id="MF_01021">
    <property type="entry name" value="HisI"/>
    <property type="match status" value="1"/>
</dbReference>
<dbReference type="InterPro" id="IPR026660">
    <property type="entry name" value="PRA-CH"/>
</dbReference>
<dbReference type="InterPro" id="IPR002496">
    <property type="entry name" value="PRib_AMP_CycHydrolase_dom"/>
</dbReference>
<dbReference type="InterPro" id="IPR038019">
    <property type="entry name" value="PRib_AMP_CycHydrolase_sf"/>
</dbReference>
<dbReference type="NCBIfam" id="NF000768">
    <property type="entry name" value="PRK00051.1"/>
    <property type="match status" value="1"/>
</dbReference>
<dbReference type="PANTHER" id="PTHR42945">
    <property type="entry name" value="HISTIDINE BIOSYNTHESIS BIFUNCTIONAL PROTEIN"/>
    <property type="match status" value="1"/>
</dbReference>
<dbReference type="PANTHER" id="PTHR42945:SF11">
    <property type="entry name" value="PHOSPHORIBOSYL-AMP CYCLOHYDROLASE"/>
    <property type="match status" value="1"/>
</dbReference>
<dbReference type="Pfam" id="PF01502">
    <property type="entry name" value="PRA-CH"/>
    <property type="match status" value="1"/>
</dbReference>
<dbReference type="SUPFAM" id="SSF141734">
    <property type="entry name" value="HisI-like"/>
    <property type="match status" value="1"/>
</dbReference>
<feature type="chain" id="PRO_0000136485" description="Phosphoribosyl-AMP cyclohydrolase">
    <location>
        <begin position="1"/>
        <end position="115"/>
    </location>
</feature>
<feature type="binding site" evidence="1">
    <location>
        <position position="80"/>
    </location>
    <ligand>
        <name>Mg(2+)</name>
        <dbReference type="ChEBI" id="CHEBI:18420"/>
    </ligand>
</feature>
<feature type="binding site" evidence="1">
    <location>
        <position position="81"/>
    </location>
    <ligand>
        <name>Zn(2+)</name>
        <dbReference type="ChEBI" id="CHEBI:29105"/>
        <note>ligand shared between dimeric partners</note>
    </ligand>
</feature>
<feature type="binding site" evidence="1">
    <location>
        <position position="82"/>
    </location>
    <ligand>
        <name>Mg(2+)</name>
        <dbReference type="ChEBI" id="CHEBI:18420"/>
    </ligand>
</feature>
<feature type="binding site" evidence="1">
    <location>
        <position position="84"/>
    </location>
    <ligand>
        <name>Mg(2+)</name>
        <dbReference type="ChEBI" id="CHEBI:18420"/>
    </ligand>
</feature>
<feature type="binding site" evidence="1">
    <location>
        <position position="97"/>
    </location>
    <ligand>
        <name>Zn(2+)</name>
        <dbReference type="ChEBI" id="CHEBI:29105"/>
        <note>ligand shared between dimeric partners</note>
    </ligand>
</feature>
<feature type="binding site" evidence="1">
    <location>
        <position position="104"/>
    </location>
    <ligand>
        <name>Zn(2+)</name>
        <dbReference type="ChEBI" id="CHEBI:29105"/>
        <note>ligand shared between dimeric partners</note>
    </ligand>
</feature>
<organism>
    <name type="scientific">Mycolicibacterium paratuberculosis (strain ATCC BAA-968 / K-10)</name>
    <name type="common">Mycobacterium paratuberculosis</name>
    <dbReference type="NCBI Taxonomy" id="262316"/>
    <lineage>
        <taxon>Bacteria</taxon>
        <taxon>Bacillati</taxon>
        <taxon>Actinomycetota</taxon>
        <taxon>Actinomycetes</taxon>
        <taxon>Mycobacteriales</taxon>
        <taxon>Mycobacteriaceae</taxon>
        <taxon>Mycobacterium</taxon>
        <taxon>Mycobacterium avium complex (MAC)</taxon>
    </lineage>
</organism>
<evidence type="ECO:0000255" key="1">
    <source>
        <dbReference type="HAMAP-Rule" id="MF_01021"/>
    </source>
</evidence>
<sequence>MTLDPQIAARLKRNADGLVTAVVQERGSKDVLMVAWMDDAALARTLETREATYYSRSRGQQWVKGETSGHTQYVHSVRLDCDGDTVLLTVDQVGGACHTGDHSCFDADVLLHPQD</sequence>